<gene>
    <name evidence="1" type="primary">rnpA</name>
    <name type="ordered locus">RBAM_038150</name>
</gene>
<proteinExistence type="inferred from homology"/>
<comment type="function">
    <text evidence="1">RNaseP catalyzes the removal of the 5'-leader sequence from pre-tRNA to produce the mature 5'-terminus. It can also cleave other RNA substrates such as 4.5S RNA. The protein component plays an auxiliary but essential role in vivo by binding to the 5'-leader sequence and broadening the substrate specificity of the ribozyme.</text>
</comment>
<comment type="catalytic activity">
    <reaction evidence="1">
        <text>Endonucleolytic cleavage of RNA, removing 5'-extranucleotides from tRNA precursor.</text>
        <dbReference type="EC" id="3.1.26.5"/>
    </reaction>
</comment>
<comment type="subunit">
    <text evidence="1">Consists of a catalytic RNA component (M1 or rnpB) and a protein subunit.</text>
</comment>
<comment type="similarity">
    <text evidence="1">Belongs to the RnpA family.</text>
</comment>
<dbReference type="EC" id="3.1.26.5" evidence="1"/>
<dbReference type="EMBL" id="CP000560">
    <property type="protein sequence ID" value="ABS76140.1"/>
    <property type="molecule type" value="Genomic_DNA"/>
</dbReference>
<dbReference type="RefSeq" id="WP_004392944.1">
    <property type="nucleotide sequence ID" value="NC_009725.2"/>
</dbReference>
<dbReference type="SMR" id="A7ZAW4"/>
<dbReference type="GeneID" id="93082949"/>
<dbReference type="KEGG" id="bay:RBAM_038150"/>
<dbReference type="HOGENOM" id="CLU_117179_9_1_9"/>
<dbReference type="Proteomes" id="UP000001120">
    <property type="component" value="Chromosome"/>
</dbReference>
<dbReference type="GO" id="GO:0030677">
    <property type="term" value="C:ribonuclease P complex"/>
    <property type="evidence" value="ECO:0007669"/>
    <property type="project" value="TreeGrafter"/>
</dbReference>
<dbReference type="GO" id="GO:0042781">
    <property type="term" value="F:3'-tRNA processing endoribonuclease activity"/>
    <property type="evidence" value="ECO:0007669"/>
    <property type="project" value="TreeGrafter"/>
</dbReference>
<dbReference type="GO" id="GO:0004526">
    <property type="term" value="F:ribonuclease P activity"/>
    <property type="evidence" value="ECO:0007669"/>
    <property type="project" value="UniProtKB-UniRule"/>
</dbReference>
<dbReference type="GO" id="GO:0000049">
    <property type="term" value="F:tRNA binding"/>
    <property type="evidence" value="ECO:0007669"/>
    <property type="project" value="UniProtKB-UniRule"/>
</dbReference>
<dbReference type="GO" id="GO:0001682">
    <property type="term" value="P:tRNA 5'-leader removal"/>
    <property type="evidence" value="ECO:0007669"/>
    <property type="project" value="UniProtKB-UniRule"/>
</dbReference>
<dbReference type="FunFam" id="3.30.230.10:FF:000021">
    <property type="entry name" value="Ribonuclease P protein component"/>
    <property type="match status" value="1"/>
</dbReference>
<dbReference type="Gene3D" id="3.30.230.10">
    <property type="match status" value="1"/>
</dbReference>
<dbReference type="HAMAP" id="MF_00227">
    <property type="entry name" value="RNase_P"/>
    <property type="match status" value="1"/>
</dbReference>
<dbReference type="InterPro" id="IPR020568">
    <property type="entry name" value="Ribosomal_Su5_D2-typ_SF"/>
</dbReference>
<dbReference type="InterPro" id="IPR014721">
    <property type="entry name" value="Ribsml_uS5_D2-typ_fold_subgr"/>
</dbReference>
<dbReference type="InterPro" id="IPR000100">
    <property type="entry name" value="RNase_P"/>
</dbReference>
<dbReference type="InterPro" id="IPR020539">
    <property type="entry name" value="RNase_P_CS"/>
</dbReference>
<dbReference type="NCBIfam" id="TIGR00188">
    <property type="entry name" value="rnpA"/>
    <property type="match status" value="1"/>
</dbReference>
<dbReference type="PANTHER" id="PTHR33992">
    <property type="entry name" value="RIBONUCLEASE P PROTEIN COMPONENT"/>
    <property type="match status" value="1"/>
</dbReference>
<dbReference type="PANTHER" id="PTHR33992:SF1">
    <property type="entry name" value="RIBONUCLEASE P PROTEIN COMPONENT"/>
    <property type="match status" value="1"/>
</dbReference>
<dbReference type="Pfam" id="PF00825">
    <property type="entry name" value="Ribonuclease_P"/>
    <property type="match status" value="1"/>
</dbReference>
<dbReference type="SUPFAM" id="SSF54211">
    <property type="entry name" value="Ribosomal protein S5 domain 2-like"/>
    <property type="match status" value="1"/>
</dbReference>
<dbReference type="PROSITE" id="PS00648">
    <property type="entry name" value="RIBONUCLEASE_P"/>
    <property type="match status" value="1"/>
</dbReference>
<protein>
    <recommendedName>
        <fullName evidence="1">Ribonuclease P protein component</fullName>
        <shortName evidence="1">RNase P protein</shortName>
        <shortName evidence="1">RNaseP protein</shortName>
        <ecNumber evidence="1">3.1.26.5</ecNumber>
    </recommendedName>
    <alternativeName>
        <fullName evidence="1">Protein C5</fullName>
    </alternativeName>
</protein>
<feature type="chain" id="PRO_1000021375" description="Ribonuclease P protein component">
    <location>
        <begin position="1"/>
        <end position="116"/>
    </location>
</feature>
<reference key="1">
    <citation type="journal article" date="2007" name="Nat. Biotechnol.">
        <title>Comparative analysis of the complete genome sequence of the plant growth-promoting bacterium Bacillus amyloliquefaciens FZB42.</title>
        <authorList>
            <person name="Chen X.H."/>
            <person name="Koumoutsi A."/>
            <person name="Scholz R."/>
            <person name="Eisenreich A."/>
            <person name="Schneider K."/>
            <person name="Heinemeyer I."/>
            <person name="Morgenstern B."/>
            <person name="Voss B."/>
            <person name="Hess W.R."/>
            <person name="Reva O."/>
            <person name="Junge H."/>
            <person name="Voigt B."/>
            <person name="Jungblut P.R."/>
            <person name="Vater J."/>
            <person name="Suessmuth R."/>
            <person name="Liesegang H."/>
            <person name="Strittmatter A."/>
            <person name="Gottschalk G."/>
            <person name="Borriss R."/>
        </authorList>
    </citation>
    <scope>NUCLEOTIDE SEQUENCE [LARGE SCALE GENOMIC DNA]</scope>
    <source>
        <strain>DSM 23117 / BGSC 10A6 / LMG 26770 / FZB42</strain>
    </source>
</reference>
<organism>
    <name type="scientific">Bacillus velezensis (strain DSM 23117 / BGSC 10A6 / LMG 26770 / FZB42)</name>
    <name type="common">Bacillus amyloliquefaciens subsp. plantarum</name>
    <dbReference type="NCBI Taxonomy" id="326423"/>
    <lineage>
        <taxon>Bacteria</taxon>
        <taxon>Bacillati</taxon>
        <taxon>Bacillota</taxon>
        <taxon>Bacilli</taxon>
        <taxon>Bacillales</taxon>
        <taxon>Bacillaceae</taxon>
        <taxon>Bacillus</taxon>
        <taxon>Bacillus amyloliquefaciens group</taxon>
    </lineage>
</organism>
<name>RNPA_BACVZ</name>
<sequence length="116" mass="13649">MKKRNRLKKNEDFQKVFKRGTSMANRQFVLYTLDQPKQEELRVGLSVSKKIGNAVVRNRVKRLIRQAVQEEKELLKPKDFIIIARKPAGDLSFEETKKSLQHLFRKTSLYKKSSSK</sequence>
<accession>A7ZAW4</accession>
<evidence type="ECO:0000255" key="1">
    <source>
        <dbReference type="HAMAP-Rule" id="MF_00227"/>
    </source>
</evidence>
<keyword id="KW-0255">Endonuclease</keyword>
<keyword id="KW-0378">Hydrolase</keyword>
<keyword id="KW-0540">Nuclease</keyword>
<keyword id="KW-0694">RNA-binding</keyword>
<keyword id="KW-0819">tRNA processing</keyword>